<protein>
    <recommendedName>
        <fullName evidence="2">Spike glycoprotein</fullName>
        <shortName evidence="2">S glycoprotein</shortName>
    </recommendedName>
    <alternativeName>
        <fullName evidence="2">E2</fullName>
    </alternativeName>
    <alternativeName>
        <fullName evidence="2">Peplomer protein</fullName>
    </alternativeName>
    <component>
        <recommendedName>
            <fullName evidence="2">Spike protein S1</fullName>
        </recommendedName>
    </component>
    <component>
        <recommendedName>
            <fullName evidence="2">Spike protein S2</fullName>
        </recommendedName>
    </component>
    <component>
        <recommendedName>
            <fullName evidence="2">Spike protein S2'</fullName>
        </recommendedName>
    </component>
</protein>
<organism>
    <name type="scientific">Porcine hemagglutinating encephalomyelitis virus (strain IAF-404)</name>
    <name type="common">HEV</name>
    <dbReference type="NCBI Taxonomy" id="230236"/>
    <lineage>
        <taxon>Viruses</taxon>
        <taxon>Riboviria</taxon>
        <taxon>Orthornavirae</taxon>
        <taxon>Pisuviricota</taxon>
        <taxon>Pisoniviricetes</taxon>
        <taxon>Nidovirales</taxon>
        <taxon>Cornidovirineae</taxon>
        <taxon>Coronaviridae</taxon>
        <taxon>Orthocoronavirinae</taxon>
        <taxon>Betacoronavirus</taxon>
        <taxon>Embecovirus</taxon>
        <taxon>Betacoronavirus 1</taxon>
    </lineage>
</organism>
<comment type="function">
    <molecule>Spike protein S1</molecule>
    <text evidence="2">Attaches the virion to the cell membrane by interacting with host receptor, initiating the infection.</text>
</comment>
<comment type="function">
    <molecule>Spike protein S2</molecule>
    <text evidence="2">Mediates fusion of the virion and cellular membranes by acting as a class I viral fusion protein. Under the current model, the protein has at least three conformational states: pre-fusion native state, pre-hairpin intermediate state, and post-fusion hairpin state. During viral and target cell membrane fusion, the coiled coil regions (heptad repeats) assume a trimer-of-hairpins structure, positioning the fusion peptide in close proximity to the C-terminal region of the ectodomain. The formation of this structure appears to drive apposition and subsequent fusion of viral and target cell membranes.</text>
</comment>
<comment type="function">
    <molecule>Spike protein S2'</molecule>
    <text evidence="2">Acts as a viral fusion peptide which is unmasked following S2 cleavage occurring upon virus endocytosis.</text>
</comment>
<comment type="subunit">
    <text evidence="2">Homotrimer; each monomer consists of a S1 and a S2 subunit. The resulting peplomers protrude from the virus surface as spikes.</text>
</comment>
<comment type="subcellular location">
    <subcellularLocation>
        <location evidence="2">Virion membrane</location>
        <topology evidence="2">Single-pass type I membrane protein</topology>
    </subcellularLocation>
    <subcellularLocation>
        <location evidence="2">Host endoplasmic reticulum-Golgi intermediate compartment membrane</location>
        <topology evidence="2">Single-pass type I membrane protein</topology>
    </subcellularLocation>
    <subcellularLocation>
        <location evidence="2">Host cell membrane</location>
        <topology evidence="2">Single-pass type I membrane protein</topology>
    </subcellularLocation>
    <text evidence="2">Accumulates in the endoplasmic reticulum-Golgi intermediate compartment, where it participates in virus particle assembly. Some S oligomers are transported to the host plasma membrane, where they may mediate cell-cell fusion.</text>
</comment>
<comment type="domain">
    <text evidence="2">Fusion peptide 1 (FP1) and fusion peptide 2 (FP2) function cooperatively and have a membrane-ordering effect on lipid headgroups and shallow hydrophobic regions of target bilayers. They are considered as two domains of an extended, bipartite FP. The membrane-ordering activity is calcium-dependent and also dependent on correct folding, which is maintained by an internal disulfide bond in FP2.</text>
</comment>
<comment type="PTM">
    <text evidence="2">Specific enzymatic cleavages in vivo yield mature proteins. The precursor is processed into S1 and S2 by host cell furin or another cellular protease to yield the mature S1 and S2 proteins. Additionally, a second cleavage leads to the release of a fusion peptide after viral attachment to host cell receptor.</text>
</comment>
<comment type="PTM">
    <text evidence="2">The cytoplasmic Cys-rich domain is palmitoylated. Spike glycoprotein is digested within host endosomes.</text>
</comment>
<comment type="similarity">
    <text evidence="2">Belongs to the betacoronaviruses spike protein family.</text>
</comment>
<organismHost>
    <name type="scientific">Sus scrofa</name>
    <name type="common">Pig</name>
    <dbReference type="NCBI Taxonomy" id="9823"/>
</organismHost>
<name>SPIKE_CVPIA</name>
<proteinExistence type="inferred from homology"/>
<dbReference type="EMBL" id="AF481863">
    <property type="protein sequence ID" value="AAM77000.1"/>
    <property type="molecule type" value="Genomic_RNA"/>
</dbReference>
<dbReference type="SMR" id="Q8JSP8"/>
<dbReference type="GlyCosmos" id="Q8JSP8">
    <property type="glycosylation" value="22 sites, No reported glycans"/>
</dbReference>
<dbReference type="Proteomes" id="UP000007543">
    <property type="component" value="Genome"/>
</dbReference>
<dbReference type="GO" id="GO:0044173">
    <property type="term" value="C:host cell endoplasmic reticulum-Golgi intermediate compartment membrane"/>
    <property type="evidence" value="ECO:0007669"/>
    <property type="project" value="UniProtKB-SubCell"/>
</dbReference>
<dbReference type="GO" id="GO:0020002">
    <property type="term" value="C:host cell plasma membrane"/>
    <property type="evidence" value="ECO:0007669"/>
    <property type="project" value="UniProtKB-SubCell"/>
</dbReference>
<dbReference type="GO" id="GO:0016020">
    <property type="term" value="C:membrane"/>
    <property type="evidence" value="ECO:0007669"/>
    <property type="project" value="UniProtKB-UniRule"/>
</dbReference>
<dbReference type="GO" id="GO:0019031">
    <property type="term" value="C:viral envelope"/>
    <property type="evidence" value="ECO:0007669"/>
    <property type="project" value="UniProtKB-UniRule"/>
</dbReference>
<dbReference type="GO" id="GO:0055036">
    <property type="term" value="C:virion membrane"/>
    <property type="evidence" value="ECO:0007669"/>
    <property type="project" value="UniProtKB-SubCell"/>
</dbReference>
<dbReference type="GO" id="GO:0075509">
    <property type="term" value="P:endocytosis involved in viral entry into host cell"/>
    <property type="evidence" value="ECO:0007669"/>
    <property type="project" value="UniProtKB-UniRule"/>
</dbReference>
<dbReference type="GO" id="GO:0039654">
    <property type="term" value="P:fusion of virus membrane with host endosome membrane"/>
    <property type="evidence" value="ECO:0007669"/>
    <property type="project" value="UniProtKB-UniRule"/>
</dbReference>
<dbReference type="GO" id="GO:0019064">
    <property type="term" value="P:fusion of virus membrane with host plasma membrane"/>
    <property type="evidence" value="ECO:0007669"/>
    <property type="project" value="UniProtKB-UniRule"/>
</dbReference>
<dbReference type="GO" id="GO:0046813">
    <property type="term" value="P:receptor-mediated virion attachment to host cell"/>
    <property type="evidence" value="ECO:0007669"/>
    <property type="project" value="UniProtKB-UniRule"/>
</dbReference>
<dbReference type="CDD" id="cd21508">
    <property type="entry name" value="HEV_Spike_S1_RBD"/>
    <property type="match status" value="1"/>
</dbReference>
<dbReference type="CDD" id="cd22380">
    <property type="entry name" value="HKU1-CoV-like_Spike_SD1-2_S1-S2_S2"/>
    <property type="match status" value="1"/>
</dbReference>
<dbReference type="CDD" id="cd21625">
    <property type="entry name" value="MHV-like_Spike_S1_NTD"/>
    <property type="match status" value="1"/>
</dbReference>
<dbReference type="FunFam" id="1.20.5.300:FF:000003">
    <property type="entry name" value="Spike glycoprotein"/>
    <property type="match status" value="1"/>
</dbReference>
<dbReference type="FunFam" id="1.20.5.300:FF:000006">
    <property type="entry name" value="Spike glycoprotein"/>
    <property type="match status" value="1"/>
</dbReference>
<dbReference type="FunFam" id="2.60.120.960:FF:000002">
    <property type="entry name" value="Spike glycoprotein"/>
    <property type="match status" value="1"/>
</dbReference>
<dbReference type="Gene3D" id="1.20.5.300">
    <property type="match status" value="2"/>
</dbReference>
<dbReference type="Gene3D" id="3.30.70.1840">
    <property type="match status" value="1"/>
</dbReference>
<dbReference type="Gene3D" id="2.60.120.960">
    <property type="entry name" value="Spike glycoprotein, N-terminal domain"/>
    <property type="match status" value="1"/>
</dbReference>
<dbReference type="HAMAP" id="MF_04099">
    <property type="entry name" value="BETA_CORONA_SPIKE"/>
    <property type="match status" value="1"/>
</dbReference>
<dbReference type="InterPro" id="IPR032500">
    <property type="entry name" value="bCoV_S1_N"/>
</dbReference>
<dbReference type="InterPro" id="IPR042578">
    <property type="entry name" value="BETA_CORONA_SPIKE"/>
</dbReference>
<dbReference type="InterPro" id="IPR043607">
    <property type="entry name" value="CoV_S1_C"/>
</dbReference>
<dbReference type="InterPro" id="IPR043473">
    <property type="entry name" value="S2_sf_CoV"/>
</dbReference>
<dbReference type="InterPro" id="IPR043002">
    <property type="entry name" value="Spike_N_sf"/>
</dbReference>
<dbReference type="InterPro" id="IPR044339">
    <property type="entry name" value="Spike_S1_NTD_MHV-like"/>
</dbReference>
<dbReference type="InterPro" id="IPR018548">
    <property type="entry name" value="Spike_S1_RBD_bCoV"/>
</dbReference>
<dbReference type="InterPro" id="IPR044380">
    <property type="entry name" value="Spike_S1_RBD_HEV"/>
</dbReference>
<dbReference type="InterPro" id="IPR036326">
    <property type="entry name" value="Spike_S1_RBD_sf_bCoV"/>
</dbReference>
<dbReference type="InterPro" id="IPR002552">
    <property type="entry name" value="Spike_S2_CoV"/>
</dbReference>
<dbReference type="InterPro" id="IPR043614">
    <property type="entry name" value="Spike_S2_CoV_C"/>
</dbReference>
<dbReference type="InterPro" id="IPR044873">
    <property type="entry name" value="Spike_S2_CoV_HR1"/>
</dbReference>
<dbReference type="InterPro" id="IPR044874">
    <property type="entry name" value="Spike_S2_CoV_HR2"/>
</dbReference>
<dbReference type="Pfam" id="PF16451">
    <property type="entry name" value="bCoV_S1_N"/>
    <property type="match status" value="1"/>
</dbReference>
<dbReference type="Pfam" id="PF09408">
    <property type="entry name" value="bCoV_S1_RBD"/>
    <property type="match status" value="1"/>
</dbReference>
<dbReference type="Pfam" id="PF19209">
    <property type="entry name" value="CoV_S1_C"/>
    <property type="match status" value="1"/>
</dbReference>
<dbReference type="Pfam" id="PF01601">
    <property type="entry name" value="CoV_S2"/>
    <property type="match status" value="1"/>
</dbReference>
<dbReference type="Pfam" id="PF19214">
    <property type="entry name" value="CoV_S2_C"/>
    <property type="match status" value="1"/>
</dbReference>
<dbReference type="SUPFAM" id="SSF111474">
    <property type="entry name" value="Coronavirus S2 glycoprotein"/>
    <property type="match status" value="2"/>
</dbReference>
<dbReference type="SUPFAM" id="SSF143587">
    <property type="entry name" value="SARS receptor-binding domain-like"/>
    <property type="match status" value="1"/>
</dbReference>
<dbReference type="PROSITE" id="PS51921">
    <property type="entry name" value="BCOV_S1_CTD"/>
    <property type="match status" value="1"/>
</dbReference>
<dbReference type="PROSITE" id="PS51922">
    <property type="entry name" value="BCOV_S1_NTD"/>
    <property type="match status" value="1"/>
</dbReference>
<dbReference type="PROSITE" id="PS51923">
    <property type="entry name" value="COV_S2_HR1"/>
    <property type="match status" value="1"/>
</dbReference>
<dbReference type="PROSITE" id="PS51924">
    <property type="entry name" value="COV_S2_HR2"/>
    <property type="match status" value="1"/>
</dbReference>
<gene>
    <name evidence="2" type="primary">S</name>
</gene>
<evidence type="ECO:0000250" key="1"/>
<evidence type="ECO:0000255" key="2">
    <source>
        <dbReference type="HAMAP-Rule" id="MF_04099"/>
    </source>
</evidence>
<evidence type="ECO:0000255" key="3">
    <source>
        <dbReference type="PROSITE-ProRule" id="PRU01269"/>
    </source>
</evidence>
<evidence type="ECO:0000255" key="4">
    <source>
        <dbReference type="PROSITE-ProRule" id="PRU01270"/>
    </source>
</evidence>
<sequence length="1349" mass="149649">MFFILLITLPSVFAVIGDLKCNTSSINDVDTGVPSISSEVVDVTNGLGTFYVLDRVYLNTTLLLNGYYPISGATFRNVALKGTRLLSTLWFKPPFLSPFNDGIFAKVKNSRFSKHGVIYSEFPAITIGSTFVNTSYSIVVKPHTSFINGNLQGFLQISVCQYTMCEYPQTICHPNLGNQRIELWHHDTDVVSCLYRRNFTYDVNADYLYFHFYQEGGTFYAYFTDTGFVTKFLFKLYLGTVLSHYYVMPLTCDSALSLEYWVTPLTTRQFLLAFDQDGVLYHAVDCASDFMSEIMCKTSSITPPTGVYELNGYTVQPVATVYRRIPDLPNCDIEAWLNSKTVSSPLNWERKIFSNCNFNMGRLMSFIQADSFGCNNIDASRLYGMCFGSITIDKFAIPNSRKVDLQVGKSGYLQSFNYKIDTAVSSCQLYYSLPAANVSVTHYNPSSWNRRYGFINQSFGSRGLHDAVYSQQCFNTPNTYCPCRTSQCIGGAGTGTCPVGTTVRKCFAAVTNATKCTCWCQPDPSTYKGVNAWTCPQSKVSIQPGQHCPGLGLVEDDCSGNPCTCKPQAFIGWSSETCLQNGRCNIFANFILNDVNSGTTCSTDLQQGNTNITTDVCVNYDLYGITGQGILIEVNATYYNSWQNLLYDSSGNLYGFRDYLSNRTFLIRSCYSGRVSAVFHANSSEPALMFRNLKCSHVFNYTILRQIQLVNYFDSYLGCVVNAYNNTASAVSTCDLTVGSGYCVDYVTALRSRRSFTTGYRFTNFEPFAANLVNDSIEPVGGLYEIQIPSEFTIGNLEEFIQTSSPKVTIDCATFVCGDYAACRQQLAEYGSFCENINAILIEVNELLDTTQLQVANSLMNGVTLSTKIKDGINFNVDDINFSSVLGCLGSECNRASTRSAIEDLLFDKVKLSDVGFVQAYNNCTGGAEIRDLICVQSYNGIKVLPPLLSENQISGYTSAATAASLFPPWTAAAGVPFYLNVQYRINGLGVTMDVLSQNQKLIASAFNNALDSIQEGFDATNSALVKIQAVVNANAEALNNLLQQLSNRFGAISASLQEILSRLDALEAKAQIDRLINGRLTALNAYVSQQLSDSTLVKFSAAQAIEKVNECVKSQSSRINFCGNGNHIISLVQNAPYGLYFIHFSYVPTKYVTAKVSPGLCIAGDIGISPKSGYFINVNNSWMFTGSGYYYPEPITQNNVVVMSTCAVNYTKAPDLMLNTSTPNLPDFKEELYQWFKNQSSLAPDLSFDYINVTFLDLQDEMNRLQEAIKVLNHSYINLKDIGTYEYYVKWPWYVWLLICLAGVVMLVLLFFICCCTGCGTSCFKKCGGCFDDYTGHQEFVIKTSHDD</sequence>
<feature type="signal peptide" evidence="2">
    <location>
        <begin position="1"/>
        <end position="13"/>
    </location>
</feature>
<feature type="chain" id="PRO_0000283904" description="Spike glycoprotein" evidence="1">
    <location>
        <begin position="14"/>
        <end position="1349"/>
    </location>
</feature>
<feature type="chain" id="PRO_0000283905" description="Spike protein S1" evidence="1">
    <location>
        <begin position="14"/>
        <end position="754"/>
    </location>
</feature>
<feature type="chain" id="PRO_0000283906" description="Spike protein S2" evidence="1">
    <location>
        <begin position="755"/>
        <end position="1349"/>
    </location>
</feature>
<feature type="chain" id="PRO_0000444088" description="Spike protein S2'" evidence="2">
    <location>
        <begin position="900"/>
        <end position="1349"/>
    </location>
</feature>
<feature type="topological domain" description="Extracellular" evidence="2">
    <location>
        <begin position="14"/>
        <end position="1293"/>
    </location>
</feature>
<feature type="transmembrane region" description="Helical" evidence="2">
    <location>
        <begin position="1294"/>
        <end position="1314"/>
    </location>
</feature>
<feature type="topological domain" description="Cytoplasmic" evidence="2">
    <location>
        <begin position="1315"/>
        <end position="1349"/>
    </location>
</feature>
<feature type="domain" description="BetaCoV S1-NTD" evidence="4">
    <location>
        <begin position="15"/>
        <end position="298"/>
    </location>
</feature>
<feature type="domain" description="BetaCoV S1-CTD" evidence="3">
    <location>
        <begin position="329"/>
        <end position="603"/>
    </location>
</feature>
<feature type="region of interest" description="Fusion peptide 1" evidence="2">
    <location>
        <begin position="900"/>
        <end position="921"/>
    </location>
</feature>
<feature type="region of interest" description="Fusion peptide 2" evidence="2">
    <location>
        <begin position="919"/>
        <end position="939"/>
    </location>
</feature>
<feature type="region of interest" description="Heptad repeat 1" evidence="2">
    <location>
        <begin position="1000"/>
        <end position="1050"/>
    </location>
</feature>
<feature type="region of interest" description="Heptad repeat 2" evidence="2">
    <location>
        <begin position="1244"/>
        <end position="1282"/>
    </location>
</feature>
<feature type="coiled-coil region" evidence="2">
    <location>
        <begin position="1029"/>
        <end position="1073"/>
    </location>
</feature>
<feature type="coiled-coil region" evidence="2">
    <location>
        <begin position="1255"/>
        <end position="1283"/>
    </location>
</feature>
<feature type="short sequence motif" description="KxHxx" evidence="2">
    <location>
        <begin position="1345"/>
        <end position="1349"/>
    </location>
</feature>
<feature type="site" description="Cleavage; by host" evidence="1">
    <location>
        <begin position="754"/>
        <end position="755"/>
    </location>
</feature>
<feature type="site" description="Cleavage" evidence="2">
    <location>
        <begin position="899"/>
        <end position="900"/>
    </location>
</feature>
<feature type="glycosylation site" description="N-linked (GlcNAc...) asparagine; by host" evidence="2">
    <location>
        <position position="22"/>
    </location>
</feature>
<feature type="glycosylation site" description="N-linked (GlcNAc...) asparagine; by host" evidence="2">
    <location>
        <position position="59"/>
    </location>
</feature>
<feature type="glycosylation site" description="N-linked (GlcNAc...) asparagine; by host" evidence="2">
    <location>
        <position position="133"/>
    </location>
</feature>
<feature type="glycosylation site" description="N-linked (GlcNAc...) asparagine; by host" evidence="2">
    <location>
        <position position="198"/>
    </location>
</feature>
<feature type="glycosylation site" description="N-linked (GlcNAc...) asparagine; by host" evidence="2">
    <location>
        <position position="437"/>
    </location>
</feature>
<feature type="glycosylation site" description="N-linked (GlcNAc...) asparagine; by host" evidence="2">
    <location>
        <position position="456"/>
    </location>
</feature>
<feature type="glycosylation site" description="N-linked (GlcNAc...) asparagine; by host" evidence="2">
    <location>
        <position position="512"/>
    </location>
</feature>
<feature type="glycosylation site" description="N-linked (GlcNAc...) asparagine; by host" evidence="2">
    <location>
        <position position="611"/>
    </location>
</feature>
<feature type="glycosylation site" description="N-linked (GlcNAc...) asparagine; by host" evidence="2">
    <location>
        <position position="635"/>
    </location>
</feature>
<feature type="glycosylation site" description="N-linked (GlcNAc...) asparagine; by host" evidence="2">
    <location>
        <position position="662"/>
    </location>
</feature>
<feature type="glycosylation site" description="N-linked (GlcNAc...) asparagine; by host" evidence="2">
    <location>
        <position position="682"/>
    </location>
</feature>
<feature type="glycosylation site" description="N-linked (GlcNAc...) asparagine; by host" evidence="2">
    <location>
        <position position="700"/>
    </location>
</feature>
<feature type="glycosylation site" description="N-linked (GlcNAc...) asparagine; by host" evidence="2">
    <location>
        <position position="725"/>
    </location>
</feature>
<feature type="glycosylation site" description="N-linked (GlcNAc...) asparagine; by host" evidence="2">
    <location>
        <position position="774"/>
    </location>
</feature>
<feature type="glycosylation site" description="N-linked (GlcNAc...) asparagine; by host" evidence="2">
    <location>
        <position position="881"/>
    </location>
</feature>
<feature type="glycosylation site" description="N-linked (GlcNAc...) asparagine; by host" evidence="2">
    <location>
        <position position="923"/>
    </location>
</feature>
<feature type="glycosylation site" description="N-linked (GlcNAc...) asparagine; by host" evidence="2">
    <location>
        <position position="1180"/>
    </location>
</feature>
<feature type="glycosylation site" description="N-linked (GlcNAc...) asparagine; by host" evidence="2">
    <location>
        <position position="1210"/>
    </location>
</feature>
<feature type="glycosylation site" description="N-linked (GlcNAc...) asparagine; by host" evidence="2">
    <location>
        <position position="1220"/>
    </location>
</feature>
<feature type="glycosylation site" description="N-linked (GlcNAc...) asparagine; by host" evidence="2">
    <location>
        <position position="1239"/>
    </location>
</feature>
<feature type="glycosylation site" description="N-linked (GlcNAc...) asparagine; by host" evidence="2">
    <location>
        <position position="1253"/>
    </location>
</feature>
<feature type="glycosylation site" description="N-linked (GlcNAc...) asparagine; by host" evidence="2">
    <location>
        <position position="1274"/>
    </location>
</feature>
<feature type="disulfide bond" evidence="4">
    <location>
        <begin position="21"/>
        <end position="165"/>
    </location>
</feature>
<feature type="disulfide bond" evidence="4">
    <location>
        <begin position="160"/>
        <end position="193"/>
    </location>
</feature>
<feature type="disulfide bond" evidence="4">
    <location>
        <begin position="172"/>
        <end position="252"/>
    </location>
</feature>
<feature type="disulfide bond" evidence="4">
    <location>
        <begin position="286"/>
        <end position="296"/>
    </location>
</feature>
<feature type="disulfide bond" evidence="3">
    <location>
        <begin position="331"/>
        <end position="356"/>
    </location>
</feature>
<feature type="disulfide bond" evidence="3">
    <location>
        <begin position="374"/>
        <end position="427"/>
    </location>
</feature>
<feature type="disulfide bond" evidence="3">
    <location>
        <begin position="386"/>
        <end position="601"/>
    </location>
</feature>
<feature type="disulfide bond" evidence="2">
    <location>
        <begin position="924"/>
        <end position="935"/>
    </location>
</feature>
<keyword id="KW-0175">Coiled coil</keyword>
<keyword id="KW-1015">Disulfide bond</keyword>
<keyword id="KW-1170">Fusion of virus membrane with host endosomal membrane</keyword>
<keyword id="KW-1168">Fusion of virus membrane with host membrane</keyword>
<keyword id="KW-0325">Glycoprotein</keyword>
<keyword id="KW-1032">Host cell membrane</keyword>
<keyword id="KW-1043">Host membrane</keyword>
<keyword id="KW-0945">Host-virus interaction</keyword>
<keyword id="KW-0449">Lipoprotein</keyword>
<keyword id="KW-0472">Membrane</keyword>
<keyword id="KW-0564">Palmitate</keyword>
<keyword id="KW-0732">Signal</keyword>
<keyword id="KW-0812">Transmembrane</keyword>
<keyword id="KW-1133">Transmembrane helix</keyword>
<keyword id="KW-1161">Viral attachment to host cell</keyword>
<keyword id="KW-0261">Viral envelope protein</keyword>
<keyword id="KW-1162">Viral penetration into host cytoplasm</keyword>
<keyword id="KW-0946">Virion</keyword>
<keyword id="KW-0843">Virulence</keyword>
<keyword id="KW-1160">Virus entry into host cell</keyword>
<accession>Q8JSP8</accession>
<reference key="1">
    <citation type="journal article" date="2002" name="J. Gen. Virol.">
        <title>Sequence of the 3'-terminal end (8.1 kb) of the genome of porcine haemagglutinating encephalomyelitis virus: comparison with other haemagglutinating coronaviruses.</title>
        <authorList>
            <person name="Sasseville A.M.-J."/>
            <person name="Boutin M."/>
            <person name="Gelinas A.-M."/>
            <person name="Dea S."/>
        </authorList>
    </citation>
    <scope>NUCLEOTIDE SEQUENCE [GENOMIC RNA]</scope>
</reference>